<reference key="1">
    <citation type="journal article" date="2005" name="Arch. Microbiol.">
        <title>The genome sequence of an anaerobic aromatic-degrading denitrifying bacterium, strain EbN1.</title>
        <authorList>
            <person name="Rabus R."/>
            <person name="Kube M."/>
            <person name="Heider J."/>
            <person name="Beck A."/>
            <person name="Heitmann K."/>
            <person name="Widdel F."/>
            <person name="Reinhardt R."/>
        </authorList>
    </citation>
    <scope>NUCLEOTIDE SEQUENCE [LARGE SCALE GENOMIC DNA]</scope>
    <source>
        <strain>DSM 19018 / LMG 30748 / EbN1</strain>
    </source>
</reference>
<evidence type="ECO:0000255" key="1">
    <source>
        <dbReference type="HAMAP-Rule" id="MF_00111"/>
    </source>
</evidence>
<proteinExistence type="inferred from homology"/>
<comment type="function">
    <text evidence="1">Cell wall formation. Adds enolpyruvyl to UDP-N-acetylglucosamine.</text>
</comment>
<comment type="catalytic activity">
    <reaction evidence="1">
        <text>phosphoenolpyruvate + UDP-N-acetyl-alpha-D-glucosamine = UDP-N-acetyl-3-O-(1-carboxyvinyl)-alpha-D-glucosamine + phosphate</text>
        <dbReference type="Rhea" id="RHEA:18681"/>
        <dbReference type="ChEBI" id="CHEBI:43474"/>
        <dbReference type="ChEBI" id="CHEBI:57705"/>
        <dbReference type="ChEBI" id="CHEBI:58702"/>
        <dbReference type="ChEBI" id="CHEBI:68483"/>
        <dbReference type="EC" id="2.5.1.7"/>
    </reaction>
</comment>
<comment type="pathway">
    <text evidence="1">Cell wall biogenesis; peptidoglycan biosynthesis.</text>
</comment>
<comment type="subcellular location">
    <subcellularLocation>
        <location evidence="1">Cytoplasm</location>
    </subcellularLocation>
</comment>
<comment type="similarity">
    <text evidence="1">Belongs to the EPSP synthase family. MurA subfamily.</text>
</comment>
<organism>
    <name type="scientific">Aromatoleum aromaticum (strain DSM 19018 / LMG 30748 / EbN1)</name>
    <name type="common">Azoarcus sp. (strain EbN1)</name>
    <dbReference type="NCBI Taxonomy" id="76114"/>
    <lineage>
        <taxon>Bacteria</taxon>
        <taxon>Pseudomonadati</taxon>
        <taxon>Pseudomonadota</taxon>
        <taxon>Betaproteobacteria</taxon>
        <taxon>Rhodocyclales</taxon>
        <taxon>Rhodocyclaceae</taxon>
        <taxon>Aromatoleum</taxon>
    </lineage>
</organism>
<feature type="chain" id="PRO_0000231151" description="UDP-N-acetylglucosamine 1-carboxyvinyltransferase">
    <location>
        <begin position="1"/>
        <end position="416"/>
    </location>
</feature>
<feature type="active site" description="Proton donor" evidence="1">
    <location>
        <position position="116"/>
    </location>
</feature>
<feature type="binding site" evidence="1">
    <location>
        <begin position="22"/>
        <end position="23"/>
    </location>
    <ligand>
        <name>phosphoenolpyruvate</name>
        <dbReference type="ChEBI" id="CHEBI:58702"/>
    </ligand>
</feature>
<feature type="binding site" evidence="1">
    <location>
        <position position="92"/>
    </location>
    <ligand>
        <name>UDP-N-acetyl-alpha-D-glucosamine</name>
        <dbReference type="ChEBI" id="CHEBI:57705"/>
    </ligand>
</feature>
<feature type="binding site" evidence="1">
    <location>
        <begin position="121"/>
        <end position="125"/>
    </location>
    <ligand>
        <name>UDP-N-acetyl-alpha-D-glucosamine</name>
        <dbReference type="ChEBI" id="CHEBI:57705"/>
    </ligand>
</feature>
<feature type="binding site" evidence="1">
    <location>
        <position position="304"/>
    </location>
    <ligand>
        <name>UDP-N-acetyl-alpha-D-glucosamine</name>
        <dbReference type="ChEBI" id="CHEBI:57705"/>
    </ligand>
</feature>
<feature type="binding site" evidence="1">
    <location>
        <position position="326"/>
    </location>
    <ligand>
        <name>UDP-N-acetyl-alpha-D-glucosamine</name>
        <dbReference type="ChEBI" id="CHEBI:57705"/>
    </ligand>
</feature>
<feature type="modified residue" description="2-(S-cysteinyl)pyruvic acid O-phosphothioketal" evidence="1">
    <location>
        <position position="116"/>
    </location>
</feature>
<dbReference type="EC" id="2.5.1.7" evidence="1"/>
<dbReference type="EMBL" id="CR555306">
    <property type="protein sequence ID" value="CAI06824.1"/>
    <property type="molecule type" value="Genomic_DNA"/>
</dbReference>
<dbReference type="RefSeq" id="WP_011236552.1">
    <property type="nucleotide sequence ID" value="NC_006513.1"/>
</dbReference>
<dbReference type="SMR" id="Q5P787"/>
<dbReference type="STRING" id="76114.ebA1302"/>
<dbReference type="KEGG" id="eba:ebA1302"/>
<dbReference type="eggNOG" id="COG0766">
    <property type="taxonomic scope" value="Bacteria"/>
</dbReference>
<dbReference type="HOGENOM" id="CLU_027387_0_0_4"/>
<dbReference type="OrthoDB" id="9803760at2"/>
<dbReference type="UniPathway" id="UPA00219"/>
<dbReference type="Proteomes" id="UP000006552">
    <property type="component" value="Chromosome"/>
</dbReference>
<dbReference type="GO" id="GO:0005737">
    <property type="term" value="C:cytoplasm"/>
    <property type="evidence" value="ECO:0007669"/>
    <property type="project" value="UniProtKB-SubCell"/>
</dbReference>
<dbReference type="GO" id="GO:0008760">
    <property type="term" value="F:UDP-N-acetylglucosamine 1-carboxyvinyltransferase activity"/>
    <property type="evidence" value="ECO:0007669"/>
    <property type="project" value="UniProtKB-UniRule"/>
</dbReference>
<dbReference type="GO" id="GO:0051301">
    <property type="term" value="P:cell division"/>
    <property type="evidence" value="ECO:0007669"/>
    <property type="project" value="UniProtKB-KW"/>
</dbReference>
<dbReference type="GO" id="GO:0071555">
    <property type="term" value="P:cell wall organization"/>
    <property type="evidence" value="ECO:0007669"/>
    <property type="project" value="UniProtKB-KW"/>
</dbReference>
<dbReference type="GO" id="GO:0009252">
    <property type="term" value="P:peptidoglycan biosynthetic process"/>
    <property type="evidence" value="ECO:0007669"/>
    <property type="project" value="UniProtKB-UniRule"/>
</dbReference>
<dbReference type="GO" id="GO:0008360">
    <property type="term" value="P:regulation of cell shape"/>
    <property type="evidence" value="ECO:0007669"/>
    <property type="project" value="UniProtKB-KW"/>
</dbReference>
<dbReference type="GO" id="GO:0019277">
    <property type="term" value="P:UDP-N-acetylgalactosamine biosynthetic process"/>
    <property type="evidence" value="ECO:0007669"/>
    <property type="project" value="InterPro"/>
</dbReference>
<dbReference type="CDD" id="cd01555">
    <property type="entry name" value="UdpNAET"/>
    <property type="match status" value="1"/>
</dbReference>
<dbReference type="FunFam" id="3.65.10.10:FF:000001">
    <property type="entry name" value="UDP-N-acetylglucosamine 1-carboxyvinyltransferase"/>
    <property type="match status" value="1"/>
</dbReference>
<dbReference type="Gene3D" id="3.65.10.10">
    <property type="entry name" value="Enolpyruvate transferase domain"/>
    <property type="match status" value="2"/>
</dbReference>
<dbReference type="HAMAP" id="MF_00111">
    <property type="entry name" value="MurA"/>
    <property type="match status" value="1"/>
</dbReference>
<dbReference type="InterPro" id="IPR001986">
    <property type="entry name" value="Enolpyruvate_Tfrase_dom"/>
</dbReference>
<dbReference type="InterPro" id="IPR036968">
    <property type="entry name" value="Enolpyruvate_Tfrase_sf"/>
</dbReference>
<dbReference type="InterPro" id="IPR050068">
    <property type="entry name" value="MurA_subfamily"/>
</dbReference>
<dbReference type="InterPro" id="IPR013792">
    <property type="entry name" value="RNA3'P_cycl/enolpyr_Trfase_a/b"/>
</dbReference>
<dbReference type="InterPro" id="IPR005750">
    <property type="entry name" value="UDP_GlcNAc_COvinyl_MurA"/>
</dbReference>
<dbReference type="NCBIfam" id="TIGR01072">
    <property type="entry name" value="murA"/>
    <property type="match status" value="1"/>
</dbReference>
<dbReference type="NCBIfam" id="NF006873">
    <property type="entry name" value="PRK09369.1"/>
    <property type="match status" value="1"/>
</dbReference>
<dbReference type="PANTHER" id="PTHR43783">
    <property type="entry name" value="UDP-N-ACETYLGLUCOSAMINE 1-CARBOXYVINYLTRANSFERASE"/>
    <property type="match status" value="1"/>
</dbReference>
<dbReference type="PANTHER" id="PTHR43783:SF1">
    <property type="entry name" value="UDP-N-ACETYLGLUCOSAMINE 1-CARBOXYVINYLTRANSFERASE"/>
    <property type="match status" value="1"/>
</dbReference>
<dbReference type="Pfam" id="PF00275">
    <property type="entry name" value="EPSP_synthase"/>
    <property type="match status" value="1"/>
</dbReference>
<dbReference type="SUPFAM" id="SSF55205">
    <property type="entry name" value="EPT/RTPC-like"/>
    <property type="match status" value="1"/>
</dbReference>
<accession>Q5P787</accession>
<sequence>MDKLLIEGGVRLAGEAAISGAKNAALPILCAALLTREPVTLTNVPQLNDIDTLLNLLGQMGVKVSRDNAAVTLDASAIDNPVAPYEMVKTMRASILVLGPLVARCGEARVSLPGGCAIGARPVDQHIKGLQAMGAQVTVEHGYVHAVVSRLAGARLFTDMVTVTGTENLMMAACLADGETVIENAAREPEVVDLANCLVAMGARISGAGTDVIRIRGVDRLNGATHRIMPDRIETGTYLCAAAATGGEIRLTRTSTAYLDAVVDKLMDAGCDVVTERDAIRLKAPARLTSVNIRTSPYPAFPTDMQAQFMAINAVASGAAMIRETIFENRFMHAVELQRLGADIRIDGNTAVVQGVERLQGATVMATDLRASASLVIAGLVAEGETVIERIYHLDRGYERLEEKLAALGAHVRRIA</sequence>
<protein>
    <recommendedName>
        <fullName evidence="1">UDP-N-acetylglucosamine 1-carboxyvinyltransferase</fullName>
        <ecNumber evidence="1">2.5.1.7</ecNumber>
    </recommendedName>
    <alternativeName>
        <fullName evidence="1">Enoylpyruvate transferase</fullName>
    </alternativeName>
    <alternativeName>
        <fullName evidence="1">UDP-N-acetylglucosamine enolpyruvyl transferase</fullName>
        <shortName evidence="1">EPT</shortName>
    </alternativeName>
</protein>
<name>MURA_AROAE</name>
<keyword id="KW-0131">Cell cycle</keyword>
<keyword id="KW-0132">Cell division</keyword>
<keyword id="KW-0133">Cell shape</keyword>
<keyword id="KW-0961">Cell wall biogenesis/degradation</keyword>
<keyword id="KW-0963">Cytoplasm</keyword>
<keyword id="KW-0573">Peptidoglycan synthesis</keyword>
<keyword id="KW-0670">Pyruvate</keyword>
<keyword id="KW-1185">Reference proteome</keyword>
<keyword id="KW-0808">Transferase</keyword>
<gene>
    <name evidence="1" type="primary">murA</name>
    <name type="ordered locus">AZOSEA07010</name>
    <name type="ORF">ebA1302</name>
</gene>